<reference key="1">
    <citation type="journal article" date="2006" name="Proc. Natl. Acad. Sci. U.S.A.">
        <title>The complete genome of Rhodococcus sp. RHA1 provides insights into a catabolic powerhouse.</title>
        <authorList>
            <person name="McLeod M.P."/>
            <person name="Warren R.L."/>
            <person name="Hsiao W.W.L."/>
            <person name="Araki N."/>
            <person name="Myhre M."/>
            <person name="Fernandes C."/>
            <person name="Miyazawa D."/>
            <person name="Wong W."/>
            <person name="Lillquist A.L."/>
            <person name="Wang D."/>
            <person name="Dosanjh M."/>
            <person name="Hara H."/>
            <person name="Petrescu A."/>
            <person name="Morin R.D."/>
            <person name="Yang G."/>
            <person name="Stott J.M."/>
            <person name="Schein J.E."/>
            <person name="Shin H."/>
            <person name="Smailus D."/>
            <person name="Siddiqui A.S."/>
            <person name="Marra M.A."/>
            <person name="Jones S.J.M."/>
            <person name="Holt R."/>
            <person name="Brinkman F.S.L."/>
            <person name="Miyauchi K."/>
            <person name="Fukuda M."/>
            <person name="Davies J.E."/>
            <person name="Mohn W.W."/>
            <person name="Eltis L.D."/>
        </authorList>
    </citation>
    <scope>NUCLEOTIDE SEQUENCE [LARGE SCALE GENOMIC DNA]</scope>
    <source>
        <strain>RHA1</strain>
    </source>
</reference>
<proteinExistence type="inferred from homology"/>
<evidence type="ECO:0000255" key="1">
    <source>
        <dbReference type="HAMAP-Rule" id="MF_00094"/>
    </source>
</evidence>
<keyword id="KW-0963">Cytoplasm</keyword>
<keyword id="KW-0488">Methylation</keyword>
<keyword id="KW-0648">Protein biosynthesis</keyword>
<sequence>MHPDVSADLSELDTTLRTVESVLDVEELRRRIDELEHQAADPELWNDQEHAQQVTSQLSHSQAELRRVEELRTRLDDMPVLYELAEDEGADAIADADAERHSLREDIAAMEVKTMLSGEYDERDALVNIRSGAGGVDAADWAEMLMRMYVRWAEKHGYGVEVYDTSYAEEAGIKSATFAVKAPYSYGTLSVEMGTHRLVRISPFDNQGRRQTSFAEVEVLPVVETTDHIDVNENDVRVDVYRSSGPGGQSVNTTDSAVRLTHIPTGIVVTCQNEKSQLQNKVSAMRVLQAKLLEVKRKEERAEMDALKGDGGSSWGNQMRSYVLHPYQMVKDLRTEYEVNNPSAVLDGDIDGFLESGIRWRMRENQAS</sequence>
<organism>
    <name type="scientific">Rhodococcus jostii (strain RHA1)</name>
    <dbReference type="NCBI Taxonomy" id="101510"/>
    <lineage>
        <taxon>Bacteria</taxon>
        <taxon>Bacillati</taxon>
        <taxon>Actinomycetota</taxon>
        <taxon>Actinomycetes</taxon>
        <taxon>Mycobacteriales</taxon>
        <taxon>Nocardiaceae</taxon>
        <taxon>Rhodococcus</taxon>
    </lineage>
</organism>
<protein>
    <recommendedName>
        <fullName evidence="1">Peptide chain release factor 2</fullName>
        <shortName evidence="1">RF-2</shortName>
    </recommendedName>
</protein>
<name>RF2_RHOJR</name>
<comment type="function">
    <text evidence="1">Peptide chain release factor 2 directs the termination of translation in response to the peptide chain termination codons UGA and UAA.</text>
</comment>
<comment type="subcellular location">
    <subcellularLocation>
        <location evidence="1">Cytoplasm</location>
    </subcellularLocation>
</comment>
<comment type="PTM">
    <text evidence="1">Methylated by PrmC. Methylation increases the termination efficiency of RF2.</text>
</comment>
<comment type="similarity">
    <text evidence="1">Belongs to the prokaryotic/mitochondrial release factor family.</text>
</comment>
<accession>Q0S2Q6</accession>
<feature type="chain" id="PRO_1000005010" description="Peptide chain release factor 2">
    <location>
        <begin position="1"/>
        <end position="368"/>
    </location>
</feature>
<feature type="modified residue" description="N5-methylglutamine" evidence="1">
    <location>
        <position position="249"/>
    </location>
</feature>
<dbReference type="EMBL" id="CP000431">
    <property type="protein sequence ID" value="ABG98180.1"/>
    <property type="molecule type" value="Genomic_DNA"/>
</dbReference>
<dbReference type="RefSeq" id="WP_009479605.1">
    <property type="nucleotide sequence ID" value="NC_008268.1"/>
</dbReference>
<dbReference type="SMR" id="Q0S2Q6"/>
<dbReference type="KEGG" id="rha:RHA1_ro06404"/>
<dbReference type="eggNOG" id="COG1186">
    <property type="taxonomic scope" value="Bacteria"/>
</dbReference>
<dbReference type="HOGENOM" id="CLU_036856_6_0_11"/>
<dbReference type="OrthoDB" id="9806673at2"/>
<dbReference type="Proteomes" id="UP000008710">
    <property type="component" value="Chromosome"/>
</dbReference>
<dbReference type="GO" id="GO:0005737">
    <property type="term" value="C:cytoplasm"/>
    <property type="evidence" value="ECO:0007669"/>
    <property type="project" value="UniProtKB-SubCell"/>
</dbReference>
<dbReference type="GO" id="GO:0016149">
    <property type="term" value="F:translation release factor activity, codon specific"/>
    <property type="evidence" value="ECO:0007669"/>
    <property type="project" value="UniProtKB-UniRule"/>
</dbReference>
<dbReference type="FunFam" id="3.30.160.20:FF:000010">
    <property type="entry name" value="Peptide chain release factor 2"/>
    <property type="match status" value="1"/>
</dbReference>
<dbReference type="Gene3D" id="3.30.160.20">
    <property type="match status" value="1"/>
</dbReference>
<dbReference type="Gene3D" id="3.30.70.1660">
    <property type="match status" value="1"/>
</dbReference>
<dbReference type="Gene3D" id="1.20.58.410">
    <property type="entry name" value="Release factor"/>
    <property type="match status" value="1"/>
</dbReference>
<dbReference type="HAMAP" id="MF_00094">
    <property type="entry name" value="Rel_fac_2"/>
    <property type="match status" value="1"/>
</dbReference>
<dbReference type="InterPro" id="IPR005139">
    <property type="entry name" value="PCRF"/>
</dbReference>
<dbReference type="InterPro" id="IPR000352">
    <property type="entry name" value="Pep_chain_release_fac_I"/>
</dbReference>
<dbReference type="InterPro" id="IPR045853">
    <property type="entry name" value="Pep_chain_release_fac_I_sf"/>
</dbReference>
<dbReference type="InterPro" id="IPR004374">
    <property type="entry name" value="PrfB"/>
</dbReference>
<dbReference type="NCBIfam" id="TIGR00020">
    <property type="entry name" value="prfB"/>
    <property type="match status" value="1"/>
</dbReference>
<dbReference type="PANTHER" id="PTHR43116:SF3">
    <property type="entry name" value="CLASS I PEPTIDE CHAIN RELEASE FACTOR"/>
    <property type="match status" value="1"/>
</dbReference>
<dbReference type="PANTHER" id="PTHR43116">
    <property type="entry name" value="PEPTIDE CHAIN RELEASE FACTOR 2"/>
    <property type="match status" value="1"/>
</dbReference>
<dbReference type="Pfam" id="PF03462">
    <property type="entry name" value="PCRF"/>
    <property type="match status" value="1"/>
</dbReference>
<dbReference type="Pfam" id="PF00472">
    <property type="entry name" value="RF-1"/>
    <property type="match status" value="1"/>
</dbReference>
<dbReference type="SMART" id="SM00937">
    <property type="entry name" value="PCRF"/>
    <property type="match status" value="1"/>
</dbReference>
<dbReference type="SUPFAM" id="SSF75620">
    <property type="entry name" value="Release factor"/>
    <property type="match status" value="1"/>
</dbReference>
<dbReference type="PROSITE" id="PS00745">
    <property type="entry name" value="RF_PROK_I"/>
    <property type="match status" value="1"/>
</dbReference>
<gene>
    <name evidence="1" type="primary">prfB</name>
    <name type="ordered locus">RHA1_ro06404</name>
</gene>